<name>ABCD3_MOUSE</name>
<gene>
    <name type="primary">Abcd3</name>
    <name type="synonym">Pmp70</name>
    <name type="synonym">Pxmp1</name>
</gene>
<organism>
    <name type="scientific">Mus musculus</name>
    <name type="common">Mouse</name>
    <dbReference type="NCBI Taxonomy" id="10090"/>
    <lineage>
        <taxon>Eukaryota</taxon>
        <taxon>Metazoa</taxon>
        <taxon>Chordata</taxon>
        <taxon>Craniata</taxon>
        <taxon>Vertebrata</taxon>
        <taxon>Euteleostomi</taxon>
        <taxon>Mammalia</taxon>
        <taxon>Eutheria</taxon>
        <taxon>Euarchontoglires</taxon>
        <taxon>Glires</taxon>
        <taxon>Rodentia</taxon>
        <taxon>Myomorpha</taxon>
        <taxon>Muroidea</taxon>
        <taxon>Muridae</taxon>
        <taxon>Murinae</taxon>
        <taxon>Mus</taxon>
        <taxon>Mus</taxon>
    </lineage>
</organism>
<protein>
    <recommendedName>
        <fullName>ATP-binding cassette sub-family D member 3</fullName>
        <ecNumber evidence="1">3.1.2.-</ecNumber>
        <ecNumber evidence="1">7.6.2.-</ecNumber>
    </recommendedName>
    <alternativeName>
        <fullName>68 kDa peroxisomal membrane protein</fullName>
        <shortName>PMP68</shortName>
    </alternativeName>
    <alternativeName>
        <fullName>70 kDa peroxisomal membrane protein</fullName>
        <shortName>PMP70</shortName>
    </alternativeName>
</protein>
<reference key="1">
    <citation type="journal article" date="1995" name="Biochem. Mol. Med.">
        <title>Differential evolution and expression of murine peroxisomal membrane protein genes.</title>
        <authorList>
            <person name="Bryant D.D."/>
            <person name="Wilson G.N."/>
        </authorList>
    </citation>
    <scope>NUCLEOTIDE SEQUENCE [GENOMIC DNA]</scope>
    <source>
        <strain>Swiss Webster</strain>
        <tissue>Liver</tissue>
    </source>
</reference>
<reference key="2">
    <citation type="journal article" date="2009" name="PLoS Biol.">
        <title>Lineage-specific biology revealed by a finished genome assembly of the mouse.</title>
        <authorList>
            <person name="Church D.M."/>
            <person name="Goodstadt L."/>
            <person name="Hillier L.W."/>
            <person name="Zody M.C."/>
            <person name="Goldstein S."/>
            <person name="She X."/>
            <person name="Bult C.J."/>
            <person name="Agarwala R."/>
            <person name="Cherry J.L."/>
            <person name="DiCuccio M."/>
            <person name="Hlavina W."/>
            <person name="Kapustin Y."/>
            <person name="Meric P."/>
            <person name="Maglott D."/>
            <person name="Birtle Z."/>
            <person name="Marques A.C."/>
            <person name="Graves T."/>
            <person name="Zhou S."/>
            <person name="Teague B."/>
            <person name="Potamousis K."/>
            <person name="Churas C."/>
            <person name="Place M."/>
            <person name="Herschleb J."/>
            <person name="Runnheim R."/>
            <person name="Forrest D."/>
            <person name="Amos-Landgraf J."/>
            <person name="Schwartz D.C."/>
            <person name="Cheng Z."/>
            <person name="Lindblad-Toh K."/>
            <person name="Eichler E.E."/>
            <person name="Ponting C.P."/>
        </authorList>
    </citation>
    <scope>NUCLEOTIDE SEQUENCE [LARGE SCALE GENOMIC DNA]</scope>
    <source>
        <strain>C57BL/6J</strain>
    </source>
</reference>
<reference key="3">
    <citation type="journal article" date="1995" name="Arch. Biochem. Biophys.">
        <title>Peroxisomal membrane protein PMP68 of mouse liver: cloning of a cDNA encompassing the nucleotide binding fold and epitope mapping of monoclonal antibodies to the expressed protein.</title>
        <authorList>
            <person name="Chen N."/>
            <person name="Lu Z."/>
            <person name="Land M."/>
            <person name="Ayres R."/>
            <person name="Crane D.I."/>
        </authorList>
    </citation>
    <scope>NUCLEOTIDE SEQUENCE [MRNA] OF 271-647</scope>
    <source>
        <tissue>Liver</tissue>
    </source>
</reference>
<reference key="4">
    <citation type="journal article" date="2007" name="Mol. Cell. Proteomics">
        <title>Mitochondrial phosphoproteome revealed by an improved IMAC method and MS/MS/MS.</title>
        <authorList>
            <person name="Lee J."/>
            <person name="Xu Y."/>
            <person name="Chen Y."/>
            <person name="Sprung R."/>
            <person name="Kim S.C."/>
            <person name="Xie S."/>
            <person name="Zhao Y."/>
        </authorList>
    </citation>
    <scope>PHOSPHORYLATION [LARGE SCALE ANALYSIS] AT SER-424</scope>
    <scope>IDENTIFICATION BY MASS SPECTROMETRY [LARGE SCALE ANALYSIS]</scope>
    <source>
        <tissue>Liver</tissue>
    </source>
</reference>
<reference key="5">
    <citation type="journal article" date="2007" name="Proc. Natl. Acad. Sci. U.S.A.">
        <title>Large-scale phosphorylation analysis of mouse liver.</title>
        <authorList>
            <person name="Villen J."/>
            <person name="Beausoleil S.A."/>
            <person name="Gerber S.A."/>
            <person name="Gygi S.P."/>
        </authorList>
    </citation>
    <scope>PHOSPHORYLATION [LARGE SCALE ANALYSIS] AT SER-659</scope>
    <scope>IDENTIFICATION BY MASS SPECTROMETRY [LARGE SCALE ANALYSIS]</scope>
    <source>
        <tissue>Liver</tissue>
    </source>
</reference>
<reference key="6">
    <citation type="journal article" date="2010" name="Cell">
        <title>A tissue-specific atlas of mouse protein phosphorylation and expression.</title>
        <authorList>
            <person name="Huttlin E.L."/>
            <person name="Jedrychowski M.P."/>
            <person name="Elias J.E."/>
            <person name="Goswami T."/>
            <person name="Rad R."/>
            <person name="Beausoleil S.A."/>
            <person name="Villen J."/>
            <person name="Haas W."/>
            <person name="Sowa M.E."/>
            <person name="Gygi S.P."/>
        </authorList>
    </citation>
    <scope>IDENTIFICATION BY MASS SPECTROMETRY [LARGE SCALE ANALYSIS]</scope>
    <source>
        <tissue>Brain</tissue>
        <tissue>Brown adipose tissue</tissue>
        <tissue>Heart</tissue>
        <tissue>Kidney</tissue>
        <tissue>Liver</tissue>
        <tissue>Lung</tissue>
        <tissue>Pancreas</tissue>
        <tissue>Spleen</tissue>
        <tissue>Testis</tissue>
    </source>
</reference>
<reference key="7">
    <citation type="journal article" date="2013" name="Proc. Natl. Acad. Sci. U.S.A.">
        <title>Label-free quantitative proteomics of the lysine acetylome in mitochondria identifies substrates of SIRT3 in metabolic pathways.</title>
        <authorList>
            <person name="Rardin M.J."/>
            <person name="Newman J.C."/>
            <person name="Held J.M."/>
            <person name="Cusack M.P."/>
            <person name="Sorensen D.J."/>
            <person name="Li B."/>
            <person name="Schilling B."/>
            <person name="Mooney S.D."/>
            <person name="Kahn C.R."/>
            <person name="Verdin E."/>
            <person name="Gibson B.W."/>
        </authorList>
    </citation>
    <scope>ACETYLATION [LARGE SCALE ANALYSIS] AT LYS-61; LYS-260; LYS-399 AND LYS-533</scope>
    <scope>IDENTIFICATION BY MASS SPECTROMETRY [LARGE SCALE ANALYSIS]</scope>
    <source>
        <tissue>Liver</tissue>
    </source>
</reference>
<reference key="8">
    <citation type="journal article" date="2015" name="Hum. Mol. Genet.">
        <title>A novel bile acid biosynthesis defect due to a deficiency of peroxisomal ABCD3.</title>
        <authorList>
            <person name="Ferdinandusse S."/>
            <person name="Jimenez-Sanchez G."/>
            <person name="Koster J."/>
            <person name="Denis S."/>
            <person name="Van Roermund C.W."/>
            <person name="Silva-Zolezzi I."/>
            <person name="Moser A.B."/>
            <person name="Visser W.F."/>
            <person name="Gulluoglu M."/>
            <person name="Durmaz O."/>
            <person name="Demirkol M."/>
            <person name="Waterham H.R."/>
            <person name="Goekcay G."/>
            <person name="Wanders R.J."/>
            <person name="Valle D."/>
        </authorList>
    </citation>
    <scope>DISRUPTION PHENOTYPE</scope>
    <scope>FUNCTION</scope>
</reference>
<comment type="function">
    <text evidence="1 2 6">Broad substrate specificity ATP-dependent transporter of the ATP-binding cassette (ABC) family that catalyzes the transport of long-chain fatty acids (LCFA)-CoA, dicarboxylic acids-CoA, long-branched-chain fatty acids-CoA and bile acids from the cytosol to the peroxisome lumen for beta-oxydation. Has fatty acyl-CoA thioesterase and ATPase activities (By similarity). Probably hydrolyzes fatty acyl-CoAs into free fatty acids prior to their ATP-dependent transport into peroxisomes (By similarity). Thus, play a role in regulation of LCFAs and energy metabolism namely, in the degradation and biosynthesis of fatty acids by beta-oxidation (PubMed:25168382).</text>
</comment>
<comment type="catalytic activity">
    <reaction evidence="1">
        <text>a very long-chain fatty acyl-CoA + H2O = a very long-chain fatty acid + CoA + H(+)</text>
        <dbReference type="Rhea" id="RHEA:67072"/>
        <dbReference type="ChEBI" id="CHEBI:15377"/>
        <dbReference type="ChEBI" id="CHEBI:15378"/>
        <dbReference type="ChEBI" id="CHEBI:57287"/>
        <dbReference type="ChEBI" id="CHEBI:58950"/>
        <dbReference type="ChEBI" id="CHEBI:138261"/>
    </reaction>
    <physiologicalReaction direction="left-to-right" evidence="1">
        <dbReference type="Rhea" id="RHEA:67073"/>
    </physiologicalReaction>
</comment>
<comment type="catalytic activity">
    <reaction evidence="1">
        <text>a very long-chain fatty acid(in) + ATP + H2O = a very long-chain fatty acid(out) + ADP + phosphate + H(+)</text>
        <dbReference type="Rhea" id="RHEA:67080"/>
        <dbReference type="ChEBI" id="CHEBI:15377"/>
        <dbReference type="ChEBI" id="CHEBI:15378"/>
        <dbReference type="ChEBI" id="CHEBI:30616"/>
        <dbReference type="ChEBI" id="CHEBI:43474"/>
        <dbReference type="ChEBI" id="CHEBI:58950"/>
        <dbReference type="ChEBI" id="CHEBI:456216"/>
    </reaction>
    <physiologicalReaction direction="left-to-right" evidence="1">
        <dbReference type="Rhea" id="RHEA:67081"/>
    </physiologicalReaction>
</comment>
<comment type="catalytic activity">
    <reaction evidence="1">
        <text>a long-chain fatty acyl-CoA + H2O = a long-chain fatty acid + CoA + H(+)</text>
        <dbReference type="Rhea" id="RHEA:67680"/>
        <dbReference type="ChEBI" id="CHEBI:15377"/>
        <dbReference type="ChEBI" id="CHEBI:15378"/>
        <dbReference type="ChEBI" id="CHEBI:57287"/>
        <dbReference type="ChEBI" id="CHEBI:57560"/>
        <dbReference type="ChEBI" id="CHEBI:83139"/>
    </reaction>
    <physiologicalReaction direction="left-to-right" evidence="1">
        <dbReference type="Rhea" id="RHEA:67681"/>
    </physiologicalReaction>
</comment>
<comment type="catalytic activity">
    <reaction evidence="1">
        <text>a long-chain fatty acid(in) + ATP + H2O = a long-chain fatty acid(out) + ADP + phosphate + H(+)</text>
        <dbReference type="Rhea" id="RHEA:67684"/>
        <dbReference type="ChEBI" id="CHEBI:15377"/>
        <dbReference type="ChEBI" id="CHEBI:15378"/>
        <dbReference type="ChEBI" id="CHEBI:30616"/>
        <dbReference type="ChEBI" id="CHEBI:43474"/>
        <dbReference type="ChEBI" id="CHEBI:57560"/>
        <dbReference type="ChEBI" id="CHEBI:456216"/>
    </reaction>
    <physiologicalReaction direction="left-to-right" evidence="1">
        <dbReference type="Rhea" id="RHEA:67685"/>
    </physiologicalReaction>
</comment>
<comment type="catalytic activity">
    <reaction evidence="1">
        <text>pristanoyl-CoA + H2O = 2,6,10,14-tetramethylpentadecanoate + CoA + H(+)</text>
        <dbReference type="Rhea" id="RHEA:40415"/>
        <dbReference type="ChEBI" id="CHEBI:15377"/>
        <dbReference type="ChEBI" id="CHEBI:15378"/>
        <dbReference type="ChEBI" id="CHEBI:57287"/>
        <dbReference type="ChEBI" id="CHEBI:77250"/>
        <dbReference type="ChEBI" id="CHEBI:77268"/>
    </reaction>
    <physiologicalReaction direction="left-to-right" evidence="1">
        <dbReference type="Rhea" id="RHEA:40416"/>
    </physiologicalReaction>
</comment>
<comment type="catalytic activity">
    <reaction evidence="1">
        <text>2,6,10,14-tetramethylpentadecanoate(in) + ATP + H2O = 2,6,10,14-tetramethylpentadecanoate(out) + ADP + phosphate + H(+)</text>
        <dbReference type="Rhea" id="RHEA:67688"/>
        <dbReference type="ChEBI" id="CHEBI:15377"/>
        <dbReference type="ChEBI" id="CHEBI:15378"/>
        <dbReference type="ChEBI" id="CHEBI:30616"/>
        <dbReference type="ChEBI" id="CHEBI:43474"/>
        <dbReference type="ChEBI" id="CHEBI:77268"/>
        <dbReference type="ChEBI" id="CHEBI:456216"/>
    </reaction>
    <physiologicalReaction direction="left-to-right" evidence="1">
        <dbReference type="Rhea" id="RHEA:67689"/>
    </physiologicalReaction>
</comment>
<comment type="catalytic activity">
    <reaction evidence="1">
        <text>hexadecanedioyl-CoA + H2O = hexadecanedioate + CoA + H(+)</text>
        <dbReference type="Rhea" id="RHEA:67696"/>
        <dbReference type="ChEBI" id="CHEBI:15377"/>
        <dbReference type="ChEBI" id="CHEBI:15378"/>
        <dbReference type="ChEBI" id="CHEBI:57287"/>
        <dbReference type="ChEBI" id="CHEBI:76276"/>
        <dbReference type="ChEBI" id="CHEBI:77085"/>
    </reaction>
    <physiologicalReaction direction="left-to-right" evidence="1">
        <dbReference type="Rhea" id="RHEA:67697"/>
    </physiologicalReaction>
</comment>
<comment type="catalytic activity">
    <reaction evidence="1">
        <text>hexadecanedioate(in) + ATP + H2O = hexadecanedioate(out) + ADP + phosphate + H(+)</text>
        <dbReference type="Rhea" id="RHEA:67692"/>
        <dbReference type="ChEBI" id="CHEBI:15377"/>
        <dbReference type="ChEBI" id="CHEBI:15378"/>
        <dbReference type="ChEBI" id="CHEBI:30616"/>
        <dbReference type="ChEBI" id="CHEBI:43474"/>
        <dbReference type="ChEBI" id="CHEBI:76276"/>
        <dbReference type="ChEBI" id="CHEBI:456216"/>
    </reaction>
</comment>
<comment type="catalytic activity">
    <reaction evidence="1">
        <text>(5Z,8Z,11Z,14Z,17Z)-eicosapentaenoyl-CoA + H2O = (5Z,8Z,11Z,14Z,17Z)-eicosapentaenoate + CoA + H(+)</text>
        <dbReference type="Rhea" id="RHEA:67712"/>
        <dbReference type="ChEBI" id="CHEBI:15377"/>
        <dbReference type="ChEBI" id="CHEBI:15378"/>
        <dbReference type="ChEBI" id="CHEBI:57287"/>
        <dbReference type="ChEBI" id="CHEBI:58562"/>
        <dbReference type="ChEBI" id="CHEBI:73862"/>
    </reaction>
    <physiologicalReaction direction="left-to-right" evidence="1">
        <dbReference type="Rhea" id="RHEA:67713"/>
    </physiologicalReaction>
</comment>
<comment type="catalytic activity">
    <reaction evidence="1">
        <text>(5Z,8Z,11Z,14Z,17Z)-eicosapentaenoate(in) + ATP + H2O = (5Z,8Z,11Z,14Z,17Z)-eicosapentaenoate(out) + ADP + phosphate + H(+)</text>
        <dbReference type="Rhea" id="RHEA:67708"/>
        <dbReference type="ChEBI" id="CHEBI:15377"/>
        <dbReference type="ChEBI" id="CHEBI:15378"/>
        <dbReference type="ChEBI" id="CHEBI:30616"/>
        <dbReference type="ChEBI" id="CHEBI:43474"/>
        <dbReference type="ChEBI" id="CHEBI:58562"/>
        <dbReference type="ChEBI" id="CHEBI:456216"/>
    </reaction>
    <physiologicalReaction direction="left-to-right" evidence="1">
        <dbReference type="Rhea" id="RHEA:67709"/>
    </physiologicalReaction>
</comment>
<comment type="catalytic activity">
    <reaction evidence="1">
        <text>(4Z,7Z,10Z,13Z,16Z,19Z)-docosahexaenoyl-CoA + H2O = (4Z,7Z,10Z,13Z,16Z,19Z)-docosahexaenoate + CoA + H(+)</text>
        <dbReference type="Rhea" id="RHEA:67700"/>
        <dbReference type="ChEBI" id="CHEBI:15377"/>
        <dbReference type="ChEBI" id="CHEBI:15378"/>
        <dbReference type="ChEBI" id="CHEBI:57287"/>
        <dbReference type="ChEBI" id="CHEBI:74298"/>
        <dbReference type="ChEBI" id="CHEBI:77016"/>
    </reaction>
    <physiologicalReaction direction="left-to-right" evidence="1">
        <dbReference type="Rhea" id="RHEA:67701"/>
    </physiologicalReaction>
</comment>
<comment type="catalytic activity">
    <reaction evidence="1">
        <text>(4Z,7Z,10Z,13Z,16Z,19Z)-docosahexaenoate(in) + ATP + H2O = (4Z,7Z,10Z,13Z,16Z,19Z)-docosahexaenoate(out) + ADP + phosphate + H(+)</text>
        <dbReference type="Rhea" id="RHEA:67704"/>
        <dbReference type="ChEBI" id="CHEBI:15377"/>
        <dbReference type="ChEBI" id="CHEBI:15378"/>
        <dbReference type="ChEBI" id="CHEBI:30616"/>
        <dbReference type="ChEBI" id="CHEBI:43474"/>
        <dbReference type="ChEBI" id="CHEBI:77016"/>
        <dbReference type="ChEBI" id="CHEBI:456216"/>
    </reaction>
</comment>
<comment type="subunit">
    <text evidence="1">Homodimers. Can form heterodimers with ABCD1 and ABCD2. Dimerization is necessary to form an active transporter. Interacts with PEX19; mediates the targeting of ABCD3 to peroxisomes.</text>
</comment>
<comment type="subcellular location">
    <subcellularLocation>
        <location evidence="1">Peroxisome membrane</location>
        <topology evidence="3">Multi-pass membrane protein</topology>
    </subcellularLocation>
</comment>
<comment type="PTM">
    <text evidence="1">Ubiquitinated by PEX2 during pexophagy in response to starvation, leading to its degradation.</text>
</comment>
<comment type="disruption phenotype">
    <text evidence="6">Animals show normal activity and have no obvious malformations. However, necroscopy show increased liver size compared to controls, and fibroblasts show reduced numbers of enlarged peroxisomes. They show however a defect in bile acid biosynthesis and they have impaired beta-oxidation of the branched-chain pristanic and phytanic fatty acids on a phytol-loaded diet.</text>
</comment>
<comment type="similarity">
    <text evidence="7">Belongs to the ABC transporter superfamily. ABCD family. Peroxisomal fatty acyl CoA transporter (TC 3.A.1.203) subfamily.</text>
</comment>
<proteinExistence type="evidence at protein level"/>
<feature type="chain" id="PRO_0000093310" description="ATP-binding cassette sub-family D member 3">
    <location>
        <begin position="1"/>
        <end position="659"/>
    </location>
</feature>
<feature type="transmembrane region" description="Helical" evidence="5">
    <location>
        <begin position="84"/>
        <end position="104"/>
    </location>
</feature>
<feature type="transmembrane region" description="Helical" evidence="5">
    <location>
        <begin position="126"/>
        <end position="146"/>
    </location>
</feature>
<feature type="transmembrane region" description="Helical" evidence="5">
    <location>
        <begin position="224"/>
        <end position="244"/>
    </location>
</feature>
<feature type="transmembrane region" description="Helical" evidence="5">
    <location>
        <begin position="313"/>
        <end position="333"/>
    </location>
</feature>
<feature type="domain" description="ABC transmembrane type-1" evidence="5">
    <location>
        <begin position="85"/>
        <end position="372"/>
    </location>
</feature>
<feature type="domain" description="ABC transporter" evidence="4">
    <location>
        <begin position="434"/>
        <end position="659"/>
    </location>
</feature>
<feature type="region of interest" description="Interaction with PEX19" evidence="1">
    <location>
        <begin position="1"/>
        <end position="61"/>
    </location>
</feature>
<feature type="binding site" evidence="4">
    <location>
        <begin position="473"/>
        <end position="480"/>
    </location>
    <ligand>
        <name>ATP</name>
        <dbReference type="ChEBI" id="CHEBI:30616"/>
    </ligand>
</feature>
<feature type="modified residue" description="N6-acetyllysine" evidence="10">
    <location>
        <position position="61"/>
    </location>
</feature>
<feature type="modified residue" description="N6-acetyllysine" evidence="10">
    <location>
        <position position="260"/>
    </location>
</feature>
<feature type="modified residue" description="N6-acetyllysine" evidence="10">
    <location>
        <position position="399"/>
    </location>
</feature>
<feature type="modified residue" description="Phosphoserine" evidence="8">
    <location>
        <position position="424"/>
    </location>
</feature>
<feature type="modified residue" description="N6-acetyllysine" evidence="10">
    <location>
        <position position="533"/>
    </location>
</feature>
<feature type="modified residue" description="Phosphoserine" evidence="9">
    <location>
        <position position="659"/>
    </location>
</feature>
<feature type="glycosylation site" description="N-linked (GlcNAc...) asparagine" evidence="3">
    <location>
        <position position="12"/>
    </location>
</feature>
<feature type="glycosylation site" description="N-linked (GlcNAc...) asparagine" evidence="3">
    <location>
        <position position="106"/>
    </location>
</feature>
<feature type="glycosylation site" description="N-linked (GlcNAc...) asparagine" evidence="3">
    <location>
        <position position="206"/>
    </location>
</feature>
<feature type="sequence conflict" description="In Ref. 1; AAA39958." evidence="7" ref="1">
    <original>E</original>
    <variation>G</variation>
    <location>
        <position position="415"/>
    </location>
</feature>
<feature type="sequence conflict" description="In Ref. 1; AAA39958." evidence="7" ref="1">
    <original>AN</original>
    <variation>NH</variation>
    <location>
        <begin position="467"/>
        <end position="468"/>
    </location>
</feature>
<feature type="sequence conflict" description="In Ref. 1; AAA39958." evidence="7" ref="1">
    <original>C</original>
    <variation>R</variation>
    <location>
        <position position="477"/>
    </location>
</feature>
<feature type="sequence conflict" description="In Ref. 1; AAA39958." evidence="7" ref="1">
    <original>R</original>
    <variation>T</variation>
    <location>
        <position position="626"/>
    </location>
</feature>
<feature type="sequence conflict" description="In Ref. 1; AAA39958." evidence="7" ref="1">
    <original>S</original>
    <variation>C</variation>
    <location>
        <position position="628"/>
    </location>
</feature>
<dbReference type="EC" id="3.1.2.-" evidence="1"/>
<dbReference type="EC" id="7.6.2.-" evidence="1"/>
<dbReference type="EMBL" id="L28836">
    <property type="protein sequence ID" value="AAA39958.1"/>
    <property type="molecule type" value="Genomic_DNA"/>
</dbReference>
<dbReference type="EMBL" id="AC129311">
    <property type="status" value="NOT_ANNOTATED_CDS"/>
    <property type="molecule type" value="Genomic_DNA"/>
</dbReference>
<dbReference type="EMBL" id="X89569">
    <property type="protein sequence ID" value="CAA61748.1"/>
    <property type="molecule type" value="mRNA"/>
</dbReference>
<dbReference type="CCDS" id="CCDS17806.1"/>
<dbReference type="PIR" id="I48716">
    <property type="entry name" value="S58009"/>
</dbReference>
<dbReference type="RefSeq" id="NP_033017.2">
    <property type="nucleotide sequence ID" value="NM_008991.4"/>
</dbReference>
<dbReference type="SMR" id="P55096"/>
<dbReference type="BioGRID" id="202521">
    <property type="interactions" value="18"/>
</dbReference>
<dbReference type="FunCoup" id="P55096">
    <property type="interactions" value="2430"/>
</dbReference>
<dbReference type="IntAct" id="P55096">
    <property type="interactions" value="3"/>
</dbReference>
<dbReference type="STRING" id="10090.ENSMUSP00000029770"/>
<dbReference type="GlyCosmos" id="P55096">
    <property type="glycosylation" value="3 sites, No reported glycans"/>
</dbReference>
<dbReference type="GlyGen" id="P55096">
    <property type="glycosylation" value="4 sites, 1 O-linked glycan (1 site)"/>
</dbReference>
<dbReference type="iPTMnet" id="P55096"/>
<dbReference type="PhosphoSitePlus" id="P55096"/>
<dbReference type="SwissPalm" id="P55096"/>
<dbReference type="jPOST" id="P55096"/>
<dbReference type="PaxDb" id="10090-ENSMUSP00000029770"/>
<dbReference type="PeptideAtlas" id="P55096"/>
<dbReference type="ProteomicsDB" id="297499"/>
<dbReference type="Pumba" id="P55096"/>
<dbReference type="Antibodypedia" id="33667">
    <property type="antibodies" value="220 antibodies from 35 providers"/>
</dbReference>
<dbReference type="DNASU" id="19299"/>
<dbReference type="Ensembl" id="ENSMUST00000029770.8">
    <property type="protein sequence ID" value="ENSMUSP00000029770.6"/>
    <property type="gene ID" value="ENSMUSG00000028127.11"/>
</dbReference>
<dbReference type="GeneID" id="19299"/>
<dbReference type="KEGG" id="mmu:19299"/>
<dbReference type="UCSC" id="uc008reg.1">
    <property type="organism name" value="mouse"/>
</dbReference>
<dbReference type="AGR" id="MGI:1349216"/>
<dbReference type="CTD" id="5825"/>
<dbReference type="MGI" id="MGI:1349216">
    <property type="gene designation" value="Abcd3"/>
</dbReference>
<dbReference type="VEuPathDB" id="HostDB:ENSMUSG00000028127"/>
<dbReference type="eggNOG" id="KOG0060">
    <property type="taxonomic scope" value="Eukaryota"/>
</dbReference>
<dbReference type="GeneTree" id="ENSGT00950000182955"/>
<dbReference type="InParanoid" id="P55096"/>
<dbReference type="OMA" id="IHDMYLD"/>
<dbReference type="OrthoDB" id="422637at2759"/>
<dbReference type="PhylomeDB" id="P55096"/>
<dbReference type="TreeFam" id="TF105205"/>
<dbReference type="Reactome" id="R-MMU-1369062">
    <property type="pathway name" value="ABC transporters in lipid homeostasis"/>
</dbReference>
<dbReference type="Reactome" id="R-MMU-8980692">
    <property type="pathway name" value="RHOA GTPase cycle"/>
</dbReference>
<dbReference type="Reactome" id="R-MMU-9013106">
    <property type="pathway name" value="RHOC GTPase cycle"/>
</dbReference>
<dbReference type="Reactome" id="R-MMU-9603798">
    <property type="pathway name" value="Class I peroxisomal membrane protein import"/>
</dbReference>
<dbReference type="BioGRID-ORCS" id="19299">
    <property type="hits" value="3 hits in 75 CRISPR screens"/>
</dbReference>
<dbReference type="CD-CODE" id="CE726F99">
    <property type="entry name" value="Postsynaptic density"/>
</dbReference>
<dbReference type="ChiTaRS" id="Abcd3">
    <property type="organism name" value="mouse"/>
</dbReference>
<dbReference type="PRO" id="PR:P55096"/>
<dbReference type="Proteomes" id="UP000000589">
    <property type="component" value="Chromosome 3"/>
</dbReference>
<dbReference type="RNAct" id="P55096">
    <property type="molecule type" value="protein"/>
</dbReference>
<dbReference type="Bgee" id="ENSMUSG00000028127">
    <property type="expression patterns" value="Expressed in epithelium of stomach and 257 other cell types or tissues"/>
</dbReference>
<dbReference type="ExpressionAtlas" id="P55096">
    <property type="expression patterns" value="baseline and differential"/>
</dbReference>
<dbReference type="GO" id="GO:0005743">
    <property type="term" value="C:mitochondrial inner membrane"/>
    <property type="evidence" value="ECO:0007005"/>
    <property type="project" value="MGI"/>
</dbReference>
<dbReference type="GO" id="GO:0005739">
    <property type="term" value="C:mitochondrion"/>
    <property type="evidence" value="ECO:0007005"/>
    <property type="project" value="MGI"/>
</dbReference>
<dbReference type="GO" id="GO:0005782">
    <property type="term" value="C:peroxisomal matrix"/>
    <property type="evidence" value="ECO:0007669"/>
    <property type="project" value="Ensembl"/>
</dbReference>
<dbReference type="GO" id="GO:0005778">
    <property type="term" value="C:peroxisomal membrane"/>
    <property type="evidence" value="ECO:0000314"/>
    <property type="project" value="MGI"/>
</dbReference>
<dbReference type="GO" id="GO:0005777">
    <property type="term" value="C:peroxisome"/>
    <property type="evidence" value="ECO:0000314"/>
    <property type="project" value="UniProtKB"/>
</dbReference>
<dbReference type="GO" id="GO:0140359">
    <property type="term" value="F:ABC-type transporter activity"/>
    <property type="evidence" value="ECO:0007669"/>
    <property type="project" value="InterPro"/>
</dbReference>
<dbReference type="GO" id="GO:0005524">
    <property type="term" value="F:ATP binding"/>
    <property type="evidence" value="ECO:0000250"/>
    <property type="project" value="UniProtKB"/>
</dbReference>
<dbReference type="GO" id="GO:0016887">
    <property type="term" value="F:ATP hydrolysis activity"/>
    <property type="evidence" value="ECO:0000250"/>
    <property type="project" value="UniProtKB"/>
</dbReference>
<dbReference type="GO" id="GO:0047617">
    <property type="term" value="F:fatty acyl-CoA hydrolase activity"/>
    <property type="evidence" value="ECO:0000250"/>
    <property type="project" value="UniProtKB"/>
</dbReference>
<dbReference type="GO" id="GO:0005324">
    <property type="term" value="F:long-chain fatty acid transmembrane transporter activity"/>
    <property type="evidence" value="ECO:0000250"/>
    <property type="project" value="UniProtKB"/>
</dbReference>
<dbReference type="GO" id="GO:0042803">
    <property type="term" value="F:protein homodimerization activity"/>
    <property type="evidence" value="ECO:0007669"/>
    <property type="project" value="Ensembl"/>
</dbReference>
<dbReference type="GO" id="GO:0015721">
    <property type="term" value="P:bile acid and bile salt transport"/>
    <property type="evidence" value="ECO:0000315"/>
    <property type="project" value="UniProtKB"/>
</dbReference>
<dbReference type="GO" id="GO:0006699">
    <property type="term" value="P:bile acid biosynthetic process"/>
    <property type="evidence" value="ECO:0000315"/>
    <property type="project" value="UniProtKB"/>
</dbReference>
<dbReference type="GO" id="GO:0006635">
    <property type="term" value="P:fatty acid beta-oxidation"/>
    <property type="evidence" value="ECO:0007669"/>
    <property type="project" value="Ensembl"/>
</dbReference>
<dbReference type="GO" id="GO:0006633">
    <property type="term" value="P:fatty acid biosynthetic process"/>
    <property type="evidence" value="ECO:0000250"/>
    <property type="project" value="UniProtKB"/>
</dbReference>
<dbReference type="GO" id="GO:0006869">
    <property type="term" value="P:lipid transport"/>
    <property type="evidence" value="ECO:0000315"/>
    <property type="project" value="UniProtKB"/>
</dbReference>
<dbReference type="GO" id="GO:0015910">
    <property type="term" value="P:long-chain fatty acid import into peroxisome"/>
    <property type="evidence" value="ECO:0000250"/>
    <property type="project" value="UniProtKB"/>
</dbReference>
<dbReference type="GO" id="GO:0007031">
    <property type="term" value="P:peroxisome organization"/>
    <property type="evidence" value="ECO:0007669"/>
    <property type="project" value="Ensembl"/>
</dbReference>
<dbReference type="GO" id="GO:1903512">
    <property type="term" value="P:phytanic acid metabolic process"/>
    <property type="evidence" value="ECO:0000315"/>
    <property type="project" value="UniProtKB"/>
</dbReference>
<dbReference type="GO" id="GO:0009410">
    <property type="term" value="P:response to xenobiotic stimulus"/>
    <property type="evidence" value="ECO:0007669"/>
    <property type="project" value="Ensembl"/>
</dbReference>
<dbReference type="GO" id="GO:0042760">
    <property type="term" value="P:very long-chain fatty acid catabolic process"/>
    <property type="evidence" value="ECO:0007669"/>
    <property type="project" value="Ensembl"/>
</dbReference>
<dbReference type="CDD" id="cd03223">
    <property type="entry name" value="ABCD_peroxisomal_ALDP"/>
    <property type="match status" value="1"/>
</dbReference>
<dbReference type="FunFam" id="1.20.1560.10:FF:000036">
    <property type="entry name" value="ATP-binding cassette sub-family D member 3"/>
    <property type="match status" value="1"/>
</dbReference>
<dbReference type="FunFam" id="3.40.50.300:FF:000636">
    <property type="entry name" value="ATP-binding cassette sub-family D member 3"/>
    <property type="match status" value="1"/>
</dbReference>
<dbReference type="Gene3D" id="1.20.1560.10">
    <property type="entry name" value="ABC transporter type 1, transmembrane domain"/>
    <property type="match status" value="1"/>
</dbReference>
<dbReference type="Gene3D" id="3.40.50.300">
    <property type="entry name" value="P-loop containing nucleotide triphosphate hydrolases"/>
    <property type="match status" value="1"/>
</dbReference>
<dbReference type="InterPro" id="IPR003593">
    <property type="entry name" value="AAA+_ATPase"/>
</dbReference>
<dbReference type="InterPro" id="IPR011527">
    <property type="entry name" value="ABC1_TM_dom"/>
</dbReference>
<dbReference type="InterPro" id="IPR036640">
    <property type="entry name" value="ABC1_TM_sf"/>
</dbReference>
<dbReference type="InterPro" id="IPR003439">
    <property type="entry name" value="ABC_transporter-like_ATP-bd"/>
</dbReference>
<dbReference type="InterPro" id="IPR017871">
    <property type="entry name" value="ABC_transporter-like_CS"/>
</dbReference>
<dbReference type="InterPro" id="IPR050835">
    <property type="entry name" value="ABC_transporter_sub-D"/>
</dbReference>
<dbReference type="InterPro" id="IPR005283">
    <property type="entry name" value="FA_transporter"/>
</dbReference>
<dbReference type="InterPro" id="IPR027417">
    <property type="entry name" value="P-loop_NTPase"/>
</dbReference>
<dbReference type="NCBIfam" id="TIGR00954">
    <property type="entry name" value="3a01203"/>
    <property type="match status" value="1"/>
</dbReference>
<dbReference type="PANTHER" id="PTHR11384:SF62">
    <property type="entry name" value="ATP-BINDING CASSETTE SUB-FAMILY D MEMBER 3"/>
    <property type="match status" value="1"/>
</dbReference>
<dbReference type="PANTHER" id="PTHR11384">
    <property type="entry name" value="ATP-BINDING CASSETTE, SUB-FAMILY D MEMBER"/>
    <property type="match status" value="1"/>
</dbReference>
<dbReference type="Pfam" id="PF06472">
    <property type="entry name" value="ABC_membrane_2"/>
    <property type="match status" value="1"/>
</dbReference>
<dbReference type="Pfam" id="PF00005">
    <property type="entry name" value="ABC_tran"/>
    <property type="match status" value="1"/>
</dbReference>
<dbReference type="SMART" id="SM00382">
    <property type="entry name" value="AAA"/>
    <property type="match status" value="1"/>
</dbReference>
<dbReference type="SUPFAM" id="SSF90123">
    <property type="entry name" value="ABC transporter transmembrane region"/>
    <property type="match status" value="1"/>
</dbReference>
<dbReference type="SUPFAM" id="SSF52540">
    <property type="entry name" value="P-loop containing nucleoside triphosphate hydrolases"/>
    <property type="match status" value="1"/>
</dbReference>
<dbReference type="PROSITE" id="PS50929">
    <property type="entry name" value="ABC_TM1F"/>
    <property type="match status" value="1"/>
</dbReference>
<dbReference type="PROSITE" id="PS00211">
    <property type="entry name" value="ABC_TRANSPORTER_1"/>
    <property type="match status" value="1"/>
</dbReference>
<dbReference type="PROSITE" id="PS50893">
    <property type="entry name" value="ABC_TRANSPORTER_2"/>
    <property type="match status" value="1"/>
</dbReference>
<evidence type="ECO:0000250" key="1">
    <source>
        <dbReference type="UniProtKB" id="P28288"/>
    </source>
</evidence>
<evidence type="ECO:0000250" key="2">
    <source>
        <dbReference type="UniProtKB" id="P33897"/>
    </source>
</evidence>
<evidence type="ECO:0000255" key="3"/>
<evidence type="ECO:0000255" key="4">
    <source>
        <dbReference type="PROSITE-ProRule" id="PRU00434"/>
    </source>
</evidence>
<evidence type="ECO:0000255" key="5">
    <source>
        <dbReference type="PROSITE-ProRule" id="PRU00441"/>
    </source>
</evidence>
<evidence type="ECO:0000269" key="6">
    <source>
    </source>
</evidence>
<evidence type="ECO:0000305" key="7"/>
<evidence type="ECO:0007744" key="8">
    <source>
    </source>
</evidence>
<evidence type="ECO:0007744" key="9">
    <source>
    </source>
</evidence>
<evidence type="ECO:0007744" key="10">
    <source>
    </source>
</evidence>
<accession>P55096</accession>
<keyword id="KW-0007">Acetylation</keyword>
<keyword id="KW-0067">ATP-binding</keyword>
<keyword id="KW-0325">Glycoprotein</keyword>
<keyword id="KW-0378">Hydrolase</keyword>
<keyword id="KW-0472">Membrane</keyword>
<keyword id="KW-0547">Nucleotide-binding</keyword>
<keyword id="KW-0576">Peroxisome</keyword>
<keyword id="KW-0597">Phosphoprotein</keyword>
<keyword id="KW-1185">Reference proteome</keyword>
<keyword id="KW-1278">Translocase</keyword>
<keyword id="KW-0812">Transmembrane</keyword>
<keyword id="KW-1133">Transmembrane helix</keyword>
<keyword id="KW-0813">Transport</keyword>
<keyword id="KW-0832">Ubl conjugation</keyword>
<sequence length="659" mass="75475">MAAFSKYLTARNTSLAGAAFLLLCLLHKRRRALGLHGKKSGKPPLQNNEKEGKKERAVVDKVFLSRLSQILKIMVPRTFCKETGYLLLIAVMLVSRTYCDVWMIQNGTLIESGIIGRSSKDFKRYLFNFIAAMPLISLVNNFLKYGLNELKLCFRVRLTRYLYEEYLQAFTYYKMGNLDNRIANPDQLLTQDVEKFCNSVVDLYSNLSKPFLDIVLYIFKLTSAIGAQGPASMMAYLLVSGLFLTRLRRPIGKMTIMEQKYEGEYRYVNSRLITNSEEIAFYNGNKREKQTIHSVFRKLVEHLHNFIFFRFSMGFIDSIIAKYVATVVGYLVVSRPFLDLAHPRHLHSTHSELLEDYYQSGRMLLRMSQALGRIVLAGREMTRLAGFTARITELMQVLKDLNHGRYERTMVSQQEKGIEGAQASPLVPGAGEIINTDNIIKFDHVPLATPNGDILIQDLSFEVRSGANVLICGPNGCGKSSLFRVLGELWPLFGGRLTKPERGKLFYVPQRPYMTLGTLRDQVIYPDGKEDQKKRGISDQVLKEYLDNVQLGHILEREGGWDSVQDWMDVLSGGEKQRMAMARLFYHKPQFAILDECTSAVSVDVEDYIYSHCRKVGITLFTVSHRKSLWKHHEYYLHMDGRGNYEFKKITEDTVEFGS</sequence>